<evidence type="ECO:0000305" key="1"/>
<protein>
    <recommendedName>
        <fullName evidence="1">Small ribosomal subunit protein uS9c</fullName>
    </recommendedName>
    <alternativeName>
        <fullName>30S ribosomal protein S9, chloroplastic</fullName>
    </alternativeName>
</protein>
<comment type="subcellular location">
    <subcellularLocation>
        <location>Plastid</location>
        <location>Chloroplast</location>
    </subcellularLocation>
</comment>
<comment type="similarity">
    <text evidence="1">Belongs to the universal ribosomal protein uS9 family.</text>
</comment>
<geneLocation type="chloroplast"/>
<dbReference type="EMBL" id="AY835431">
    <property type="protein sequence ID" value="AAV80649.1"/>
    <property type="molecule type" value="Genomic_DNA"/>
</dbReference>
<dbReference type="RefSeq" id="YP_636227.1">
    <property type="nucleotide sequence ID" value="NC_008114.1"/>
</dbReference>
<dbReference type="SMR" id="Q3ZJ40"/>
<dbReference type="GeneID" id="4108723"/>
<dbReference type="GO" id="GO:0009507">
    <property type="term" value="C:chloroplast"/>
    <property type="evidence" value="ECO:0007669"/>
    <property type="project" value="UniProtKB-SubCell"/>
</dbReference>
<dbReference type="GO" id="GO:0015935">
    <property type="term" value="C:small ribosomal subunit"/>
    <property type="evidence" value="ECO:0007669"/>
    <property type="project" value="TreeGrafter"/>
</dbReference>
<dbReference type="GO" id="GO:0003723">
    <property type="term" value="F:RNA binding"/>
    <property type="evidence" value="ECO:0007669"/>
    <property type="project" value="TreeGrafter"/>
</dbReference>
<dbReference type="GO" id="GO:0003735">
    <property type="term" value="F:structural constituent of ribosome"/>
    <property type="evidence" value="ECO:0007669"/>
    <property type="project" value="InterPro"/>
</dbReference>
<dbReference type="GO" id="GO:0006412">
    <property type="term" value="P:translation"/>
    <property type="evidence" value="ECO:0007669"/>
    <property type="project" value="UniProtKB-UniRule"/>
</dbReference>
<dbReference type="FunFam" id="3.30.230.10:FF:000001">
    <property type="entry name" value="30S ribosomal protein S9"/>
    <property type="match status" value="1"/>
</dbReference>
<dbReference type="Gene3D" id="3.30.230.10">
    <property type="match status" value="1"/>
</dbReference>
<dbReference type="HAMAP" id="MF_00532_B">
    <property type="entry name" value="Ribosomal_uS9_B"/>
    <property type="match status" value="1"/>
</dbReference>
<dbReference type="InterPro" id="IPR020568">
    <property type="entry name" value="Ribosomal_Su5_D2-typ_SF"/>
</dbReference>
<dbReference type="InterPro" id="IPR000754">
    <property type="entry name" value="Ribosomal_uS9"/>
</dbReference>
<dbReference type="InterPro" id="IPR023035">
    <property type="entry name" value="Ribosomal_uS9_bac/plastid"/>
</dbReference>
<dbReference type="InterPro" id="IPR020574">
    <property type="entry name" value="Ribosomal_uS9_CS"/>
</dbReference>
<dbReference type="InterPro" id="IPR014721">
    <property type="entry name" value="Ribsml_uS5_D2-typ_fold_subgr"/>
</dbReference>
<dbReference type="NCBIfam" id="NF001099">
    <property type="entry name" value="PRK00132.1"/>
    <property type="match status" value="1"/>
</dbReference>
<dbReference type="PANTHER" id="PTHR21569">
    <property type="entry name" value="RIBOSOMAL PROTEIN S9"/>
    <property type="match status" value="1"/>
</dbReference>
<dbReference type="PANTHER" id="PTHR21569:SF1">
    <property type="entry name" value="SMALL RIBOSOMAL SUBUNIT PROTEIN US9M"/>
    <property type="match status" value="1"/>
</dbReference>
<dbReference type="Pfam" id="PF00380">
    <property type="entry name" value="Ribosomal_S9"/>
    <property type="match status" value="1"/>
</dbReference>
<dbReference type="SUPFAM" id="SSF54211">
    <property type="entry name" value="Ribosomal protein S5 domain 2-like"/>
    <property type="match status" value="1"/>
</dbReference>
<dbReference type="PROSITE" id="PS00360">
    <property type="entry name" value="RIBOSOMAL_S9"/>
    <property type="match status" value="1"/>
</dbReference>
<gene>
    <name type="primary">rps9</name>
</gene>
<feature type="chain" id="PRO_0000277075" description="Small ribosomal subunit protein uS9c">
    <location>
        <begin position="1"/>
        <end position="141"/>
    </location>
</feature>
<organism>
    <name type="scientific">Tupiella akineta</name>
    <name type="common">Green alga</name>
    <name type="synonym">Pseudendoclonium akinetum</name>
    <dbReference type="NCBI Taxonomy" id="160070"/>
    <lineage>
        <taxon>Eukaryota</taxon>
        <taxon>Viridiplantae</taxon>
        <taxon>Chlorophyta</taxon>
        <taxon>Ulvophyceae</taxon>
        <taxon>OUU clade</taxon>
        <taxon>Ulotrichales</taxon>
        <taxon>Tupiellaceae</taxon>
        <taxon>Tupiella</taxon>
    </lineage>
</organism>
<name>RR9_TUPAK</name>
<proteinExistence type="inferred from homology"/>
<sequence length="141" mass="15899">MNNLTNPSKLALNSSLTKTGRRKTSIATVQLFPGNGEFTINGISGIEYMQQKEELIFAIQEPLHFLKLKNEFNLIIKVKGGGLVGQVNAIKLGIARALCEFDLTYRNSLKLKGFLTRDPRCKERKKYGLKKARKAPQFSKR</sequence>
<accession>Q3ZJ40</accession>
<keyword id="KW-0150">Chloroplast</keyword>
<keyword id="KW-0934">Plastid</keyword>
<keyword id="KW-0687">Ribonucleoprotein</keyword>
<keyword id="KW-0689">Ribosomal protein</keyword>
<reference key="1">
    <citation type="journal article" date="2005" name="Mol. Biol. Evol.">
        <title>The chloroplast genome sequence of the green alga Pseudendoclonium akinetum (Ulvophyceae) reveals unusual structural features and new insights into the branching order of chlorophyte lineages.</title>
        <authorList>
            <person name="Pombert J.-F."/>
            <person name="Otis C."/>
            <person name="Lemieux C."/>
            <person name="Turmel M."/>
        </authorList>
    </citation>
    <scope>NUCLEOTIDE SEQUENCE [LARGE SCALE GENOMIC DNA]</scope>
    <source>
        <strain>UTEX 1912</strain>
    </source>
</reference>